<evidence type="ECO:0000255" key="1">
    <source>
        <dbReference type="HAMAP-Rule" id="MF_01031"/>
    </source>
</evidence>
<accession>Q9JU81</accession>
<accession>A1IS57</accession>
<proteinExistence type="inferred from homology"/>
<organism>
    <name type="scientific">Neisseria meningitidis serogroup A / serotype 4A (strain DSM 15465 / Z2491)</name>
    <dbReference type="NCBI Taxonomy" id="122587"/>
    <lineage>
        <taxon>Bacteria</taxon>
        <taxon>Pseudomonadati</taxon>
        <taxon>Pseudomonadota</taxon>
        <taxon>Betaproteobacteria</taxon>
        <taxon>Neisseriales</taxon>
        <taxon>Neisseriaceae</taxon>
        <taxon>Neisseria</taxon>
    </lineage>
</organism>
<reference key="1">
    <citation type="journal article" date="2000" name="Nature">
        <title>Complete DNA sequence of a serogroup A strain of Neisseria meningitidis Z2491.</title>
        <authorList>
            <person name="Parkhill J."/>
            <person name="Achtman M."/>
            <person name="James K.D."/>
            <person name="Bentley S.D."/>
            <person name="Churcher C.M."/>
            <person name="Klee S.R."/>
            <person name="Morelli G."/>
            <person name="Basham D."/>
            <person name="Brown D."/>
            <person name="Chillingworth T."/>
            <person name="Davies R.M."/>
            <person name="Davis P."/>
            <person name="Devlin K."/>
            <person name="Feltwell T."/>
            <person name="Hamlin N."/>
            <person name="Holroyd S."/>
            <person name="Jagels K."/>
            <person name="Leather S."/>
            <person name="Moule S."/>
            <person name="Mungall K.L."/>
            <person name="Quail M.A."/>
            <person name="Rajandream M.A."/>
            <person name="Rutherford K.M."/>
            <person name="Simmonds M."/>
            <person name="Skelton J."/>
            <person name="Whitehead S."/>
            <person name="Spratt B.G."/>
            <person name="Barrell B.G."/>
        </authorList>
    </citation>
    <scope>NUCLEOTIDE SEQUENCE [LARGE SCALE GENOMIC DNA]</scope>
    <source>
        <strain>DSM 15465 / Z2491</strain>
    </source>
</reference>
<gene>
    <name evidence="1" type="primary">leuD</name>
    <name type="ordered locus">NMA1452</name>
</gene>
<dbReference type="EC" id="4.2.1.33" evidence="1"/>
<dbReference type="EMBL" id="AL157959">
    <property type="protein sequence ID" value="CAM08610.1"/>
    <property type="molecule type" value="Genomic_DNA"/>
</dbReference>
<dbReference type="PIR" id="C81836">
    <property type="entry name" value="C81836"/>
</dbReference>
<dbReference type="RefSeq" id="WP_002241612.1">
    <property type="nucleotide sequence ID" value="NC_003116.1"/>
</dbReference>
<dbReference type="SMR" id="Q9JU81"/>
<dbReference type="EnsemblBacteria" id="CAM08610">
    <property type="protein sequence ID" value="CAM08610"/>
    <property type="gene ID" value="NMA1452"/>
</dbReference>
<dbReference type="KEGG" id="nma:NMA1452"/>
<dbReference type="HOGENOM" id="CLU_081378_0_3_4"/>
<dbReference type="UniPathway" id="UPA00048">
    <property type="reaction ID" value="UER00071"/>
</dbReference>
<dbReference type="Proteomes" id="UP000000626">
    <property type="component" value="Chromosome"/>
</dbReference>
<dbReference type="GO" id="GO:0009316">
    <property type="term" value="C:3-isopropylmalate dehydratase complex"/>
    <property type="evidence" value="ECO:0007669"/>
    <property type="project" value="InterPro"/>
</dbReference>
<dbReference type="GO" id="GO:0003861">
    <property type="term" value="F:3-isopropylmalate dehydratase activity"/>
    <property type="evidence" value="ECO:0007669"/>
    <property type="project" value="UniProtKB-UniRule"/>
</dbReference>
<dbReference type="GO" id="GO:0009098">
    <property type="term" value="P:L-leucine biosynthetic process"/>
    <property type="evidence" value="ECO:0007669"/>
    <property type="project" value="UniProtKB-UniRule"/>
</dbReference>
<dbReference type="CDD" id="cd01577">
    <property type="entry name" value="IPMI_Swivel"/>
    <property type="match status" value="1"/>
</dbReference>
<dbReference type="FunFam" id="3.20.19.10:FF:000003">
    <property type="entry name" value="3-isopropylmalate dehydratase small subunit"/>
    <property type="match status" value="1"/>
</dbReference>
<dbReference type="Gene3D" id="3.20.19.10">
    <property type="entry name" value="Aconitase, domain 4"/>
    <property type="match status" value="1"/>
</dbReference>
<dbReference type="HAMAP" id="MF_01031">
    <property type="entry name" value="LeuD_type1"/>
    <property type="match status" value="1"/>
</dbReference>
<dbReference type="InterPro" id="IPR004431">
    <property type="entry name" value="3-IsopropMal_deHydase_ssu"/>
</dbReference>
<dbReference type="InterPro" id="IPR015928">
    <property type="entry name" value="Aconitase/3IPM_dehydase_swvl"/>
</dbReference>
<dbReference type="InterPro" id="IPR000573">
    <property type="entry name" value="AconitaseA/IPMdHydase_ssu_swvl"/>
</dbReference>
<dbReference type="InterPro" id="IPR033940">
    <property type="entry name" value="IPMI_Swivel"/>
</dbReference>
<dbReference type="InterPro" id="IPR050075">
    <property type="entry name" value="LeuD"/>
</dbReference>
<dbReference type="NCBIfam" id="TIGR00171">
    <property type="entry name" value="leuD"/>
    <property type="match status" value="1"/>
</dbReference>
<dbReference type="NCBIfam" id="NF002458">
    <property type="entry name" value="PRK01641.1"/>
    <property type="match status" value="1"/>
</dbReference>
<dbReference type="PANTHER" id="PTHR43345:SF5">
    <property type="entry name" value="3-ISOPROPYLMALATE DEHYDRATASE SMALL SUBUNIT"/>
    <property type="match status" value="1"/>
</dbReference>
<dbReference type="PANTHER" id="PTHR43345">
    <property type="entry name" value="3-ISOPROPYLMALATE DEHYDRATASE SMALL SUBUNIT 2-RELATED-RELATED"/>
    <property type="match status" value="1"/>
</dbReference>
<dbReference type="Pfam" id="PF00694">
    <property type="entry name" value="Aconitase_C"/>
    <property type="match status" value="1"/>
</dbReference>
<dbReference type="SUPFAM" id="SSF52016">
    <property type="entry name" value="LeuD/IlvD-like"/>
    <property type="match status" value="1"/>
</dbReference>
<feature type="chain" id="PRO_0000141844" description="3-isopropylmalate dehydratase small subunit">
    <location>
        <begin position="1"/>
        <end position="213"/>
    </location>
</feature>
<keyword id="KW-0028">Amino-acid biosynthesis</keyword>
<keyword id="KW-0100">Branched-chain amino acid biosynthesis</keyword>
<keyword id="KW-0432">Leucine biosynthesis</keyword>
<keyword id="KW-0456">Lyase</keyword>
<comment type="function">
    <text evidence="1">Catalyzes the isomerization between 2-isopropylmalate and 3-isopropylmalate, via the formation of 2-isopropylmaleate.</text>
</comment>
<comment type="catalytic activity">
    <reaction evidence="1">
        <text>(2R,3S)-3-isopropylmalate = (2S)-2-isopropylmalate</text>
        <dbReference type="Rhea" id="RHEA:32287"/>
        <dbReference type="ChEBI" id="CHEBI:1178"/>
        <dbReference type="ChEBI" id="CHEBI:35121"/>
        <dbReference type="EC" id="4.2.1.33"/>
    </reaction>
</comment>
<comment type="pathway">
    <text evidence="1">Amino-acid biosynthesis; L-leucine biosynthesis; L-leucine from 3-methyl-2-oxobutanoate: step 2/4.</text>
</comment>
<comment type="subunit">
    <text evidence="1">Heterodimer of LeuC and LeuD.</text>
</comment>
<comment type="similarity">
    <text evidence="1">Belongs to the LeuD family. LeuD type 1 subfamily.</text>
</comment>
<sequence length="213" mass="24264">MKAFTKITAIVAPLDRSNVDTDAIIPKQFLKSIKRSGFGPNAFDEWRYLDHGEPGMDNSKRPLNPDFSLNQPRYQGAQILLTRKNFGCGSSREHAPWALDDYGFRAVIAPSFADIFFNNCYKNGLLPIVLTEEQVDRLFKEVEANEGYRLSIDLAEQTLTTPSGETFTFDITEHRKHCLLNGLDEIGLTLQHADEIHAFEEKRRQSQPWLFNG</sequence>
<name>LEUD_NEIMA</name>
<protein>
    <recommendedName>
        <fullName evidence="1">3-isopropylmalate dehydratase small subunit</fullName>
        <ecNumber evidence="1">4.2.1.33</ecNumber>
    </recommendedName>
    <alternativeName>
        <fullName evidence="1">Alpha-IPM isomerase</fullName>
        <shortName evidence="1">IPMI</shortName>
    </alternativeName>
    <alternativeName>
        <fullName evidence="1">Isopropylmalate isomerase</fullName>
    </alternativeName>
</protein>